<reference key="1">
    <citation type="journal article" date="1989" name="Mol. Microbiol.">
        <title>A family of genes encoding a cell-killing function may be conserved in all Gram-negative bacteria.</title>
        <authorList>
            <person name="Poulsen L.K."/>
            <person name="Larsen N.W."/>
            <person name="Molin S."/>
            <person name="Andersson P."/>
        </authorList>
    </citation>
    <scope>NUCLEOTIDE SEQUENCE [GENOMIC DNA]</scope>
</reference>
<reference key="2">
    <citation type="journal article" date="1992" name="Nucleic Acids Res.">
        <title>Systematic sequencing of the Escherichia coli genome: analysis of the 0-2.4 min region.</title>
        <authorList>
            <person name="Yura T."/>
            <person name="Mori H."/>
            <person name="Nagai H."/>
            <person name="Nagata T."/>
            <person name="Ishihama A."/>
            <person name="Fujita N."/>
            <person name="Isono K."/>
            <person name="Mizobuchi K."/>
            <person name="Nakata A."/>
        </authorList>
    </citation>
    <scope>NUCLEOTIDE SEQUENCE [LARGE SCALE GENOMIC DNA]</scope>
    <source>
        <strain>K12</strain>
    </source>
</reference>
<reference key="3">
    <citation type="journal article" date="1997" name="Science">
        <title>The complete genome sequence of Escherichia coli K-12.</title>
        <authorList>
            <person name="Blattner F.R."/>
            <person name="Plunkett G. III"/>
            <person name="Bloch C.A."/>
            <person name="Perna N.T."/>
            <person name="Burland V."/>
            <person name="Riley M."/>
            <person name="Collado-Vides J."/>
            <person name="Glasner J.D."/>
            <person name="Rode C.K."/>
            <person name="Mayhew G.F."/>
            <person name="Gregor J."/>
            <person name="Davis N.W."/>
            <person name="Kirkpatrick H.A."/>
            <person name="Goeden M.A."/>
            <person name="Rose D.J."/>
            <person name="Mau B."/>
            <person name="Shao Y."/>
        </authorList>
    </citation>
    <scope>NUCLEOTIDE SEQUENCE [LARGE SCALE GENOMIC DNA]</scope>
    <source>
        <strain>K12 / MG1655 / ATCC 47076</strain>
    </source>
</reference>
<reference key="4">
    <citation type="journal article" date="2006" name="Mol. Syst. Biol.">
        <title>Highly accurate genome sequences of Escherichia coli K-12 strains MG1655 and W3110.</title>
        <authorList>
            <person name="Hayashi K."/>
            <person name="Morooka N."/>
            <person name="Yamamoto Y."/>
            <person name="Fujita K."/>
            <person name="Isono K."/>
            <person name="Choi S."/>
            <person name="Ohtsubo E."/>
            <person name="Baba T."/>
            <person name="Wanner B.L."/>
            <person name="Mori H."/>
            <person name="Horiuchi T."/>
        </authorList>
    </citation>
    <scope>NUCLEOTIDE SEQUENCE [LARGE SCALE GENOMIC DNA]</scope>
    <source>
        <strain>K12 / W3110 / ATCC 27325 / DSM 5911</strain>
    </source>
</reference>
<reference key="5">
    <citation type="journal article" date="1991" name="Mol. Microbiol.">
        <title>Topographic analysis of the toxic Gef protein from Escherichia coli.</title>
        <authorList>
            <person name="Poulsen L.K."/>
            <person name="Refn A."/>
            <person name="Molin S."/>
            <person name="Andersson P."/>
        </authorList>
    </citation>
    <scope>SUBUNIT</scope>
    <scope>SUBCELLULAR LOCATION</scope>
    <scope>DOMAIN</scope>
    <scope>DISULFIDE BOND</scope>
    <scope>MUTAGENESIS</scope>
    <scope>TOPOLOGY</scope>
</reference>
<reference key="6">
    <citation type="journal article" date="1999" name="Mol. Microbiol.">
        <title>Multiple hok genes on the chromosome of Escherichia coli.</title>
        <authorList>
            <person name="Pedersen K."/>
            <person name="Gerdes K."/>
        </authorList>
    </citation>
    <scope>FUNCTION</scope>
    <source>
        <strain>ECOR 24</strain>
        <strain>K12 / MG1655 / ATCC 47076</strain>
    </source>
</reference>
<keyword id="KW-0997">Cell inner membrane</keyword>
<keyword id="KW-1003">Cell membrane</keyword>
<keyword id="KW-1015">Disulfide bond</keyword>
<keyword id="KW-0472">Membrane</keyword>
<keyword id="KW-1185">Reference proteome</keyword>
<keyword id="KW-0735">Signal-anchor</keyword>
<keyword id="KW-1277">Toxin-antitoxin system</keyword>
<keyword id="KW-0812">Transmembrane</keyword>
<keyword id="KW-1133">Transmembrane helix</keyword>
<proteinExistence type="evidence at protein level"/>
<name>HOKC_ECOLI</name>
<feature type="chain" id="PRO_0000199031" description="Toxic protein HokC">
    <location>
        <begin position="1"/>
        <end position="50"/>
    </location>
</feature>
<feature type="topological domain" description="Cytoplasmic" evidence="7">
    <location>
        <begin position="1"/>
        <end position="5"/>
    </location>
</feature>
<feature type="transmembrane region" description="Helical; Signal-anchor for type II membrane protein" evidence="5">
    <location>
        <begin position="6"/>
        <end position="24"/>
    </location>
</feature>
<feature type="topological domain" description="Periplasmic" evidence="7">
    <location>
        <begin position="25"/>
        <end position="50"/>
    </location>
</feature>
<feature type="mutagenesis site" description="No action on toxicity." evidence="2">
    <original>C</original>
    <variation>S</variation>
    <location>
        <position position="15"/>
    </location>
</feature>
<feature type="mutagenesis site" description="Non-toxic." evidence="2">
    <original>T</original>
    <variation>K</variation>
    <location>
        <position position="25"/>
    </location>
</feature>
<feature type="mutagenesis site" description="Non-toxic." evidence="2">
    <original>L</original>
    <variation>P</variation>
    <location>
        <position position="29"/>
    </location>
</feature>
<feature type="mutagenesis site" description="Prevents dimer formation." evidence="2">
    <original>C</original>
    <variation>S</variation>
    <location>
        <position position="30"/>
    </location>
</feature>
<feature type="mutagenesis site" description="Non-toxic." evidence="2">
    <original>V</original>
    <variation>A</variation>
    <location>
        <position position="41"/>
    </location>
</feature>
<feature type="mutagenesis site" description="Non-toxic." evidence="2">
    <original>S</original>
    <variation>E</variation>
    <location>
        <position position="49"/>
    </location>
</feature>
<evidence type="ECO:0000269" key="1">
    <source>
    </source>
</evidence>
<evidence type="ECO:0000269" key="2">
    <source>
    </source>
</evidence>
<evidence type="ECO:0000303" key="3">
    <source>
    </source>
</evidence>
<evidence type="ECO:0000303" key="4">
    <source>
    </source>
</evidence>
<evidence type="ECO:0000305" key="5"/>
<evidence type="ECO:0000305" key="6">
    <source>
    </source>
</evidence>
<evidence type="ECO:0000305" key="7">
    <source>
    </source>
</evidence>
<comment type="function">
    <text evidence="1 6">Toxic component of a type I toxin-antitoxin (TA) system. When overexpressed kills cells within minutes; causes collapse of the transmembrane potential and arrest of respiration (PubMed:10361310). Its toxic effect is probably neutralized by antisense antitoxin RNA SokC (PubMed:10361310).</text>
</comment>
<comment type="subunit">
    <text evidence="2">Homodimer; disulfide-linked.</text>
</comment>
<comment type="subcellular location">
    <subcellularLocation>
        <location evidence="2">Cell inner membrane</location>
        <topology>Single-pass type II membrane protein</topology>
    </subcellularLocation>
</comment>
<comment type="domain">
    <text evidence="2">The periplasmic portion confers toxicity; dimerization is not required for toxicity.</text>
</comment>
<comment type="miscellaneous">
    <text evidence="6">Interrupted by an IS186 element, which silences the locus in strain K12 MG1655.</text>
</comment>
<comment type="similarity">
    <text evidence="5">Belongs to the Hok/Gef family.</text>
</comment>
<sequence>MKQHKAMIVALIVICITAVVAALVTRKDLCEVHIRTGQTEVAVFTAYESE</sequence>
<gene>
    <name evidence="3" type="primary">hokC</name>
    <name evidence="4" type="synonym">gef</name>
    <name type="ordered locus">b4412</name>
    <name type="ordered locus">JW5002</name>
    <name type="ORF">b0018.1</name>
</gene>
<protein>
    <recommendedName>
        <fullName>Toxic protein HokC</fullName>
    </recommendedName>
    <alternativeName>
        <fullName>Protein Gef</fullName>
    </alternativeName>
</protein>
<organism>
    <name type="scientific">Escherichia coli (strain K12)</name>
    <dbReference type="NCBI Taxonomy" id="83333"/>
    <lineage>
        <taxon>Bacteria</taxon>
        <taxon>Pseudomonadati</taxon>
        <taxon>Pseudomonadota</taxon>
        <taxon>Gammaproteobacteria</taxon>
        <taxon>Enterobacterales</taxon>
        <taxon>Enterobacteriaceae</taxon>
        <taxon>Escherichia</taxon>
    </lineage>
</organism>
<accession>P0ACG4</accession>
<accession>P22982</accession>
<accession>P75618</accession>
<accession>Q2MCH5</accession>
<dbReference type="EMBL" id="X17311">
    <property type="protein sequence ID" value="CAB37348.1"/>
    <property type="molecule type" value="Genomic_DNA"/>
</dbReference>
<dbReference type="EMBL" id="U00096">
    <property type="protein sequence ID" value="AAT48122.1"/>
    <property type="molecule type" value="Genomic_DNA"/>
</dbReference>
<dbReference type="EMBL" id="AP009048">
    <property type="protein sequence ID" value="BAE76031.1"/>
    <property type="molecule type" value="Genomic_DNA"/>
</dbReference>
<dbReference type="RefSeq" id="YP_025292.1">
    <property type="nucleotide sequence ID" value="NC_000913.3"/>
</dbReference>
<dbReference type="SMR" id="P0ACG4"/>
<dbReference type="BioGRID" id="4259470">
    <property type="interactions" value="3"/>
</dbReference>
<dbReference type="FunCoup" id="P0ACG4">
    <property type="interactions" value="153"/>
</dbReference>
<dbReference type="TCDB" id="1.E.53.1.1">
    <property type="family name" value="the toxic hok/gef protein (hok/gef) family"/>
</dbReference>
<dbReference type="EnsemblBacteria" id="AAT48122">
    <property type="protein sequence ID" value="AAT48122"/>
    <property type="gene ID" value="b4412"/>
</dbReference>
<dbReference type="GeneID" id="2847744"/>
<dbReference type="KEGG" id="ecj:JW5002"/>
<dbReference type="KEGG" id="eco:b4412"/>
<dbReference type="KEGG" id="ecoc:C3026_00085"/>
<dbReference type="PATRIC" id="fig|511145.12.peg.15"/>
<dbReference type="EchoBASE" id="EB0368"/>
<dbReference type="eggNOG" id="ENOG50339S1">
    <property type="taxonomic scope" value="Bacteria"/>
</dbReference>
<dbReference type="HOGENOM" id="CLU_177638_2_0_6"/>
<dbReference type="InParanoid" id="P0ACG4"/>
<dbReference type="PhylomeDB" id="P0ACG4"/>
<dbReference type="BioCyc" id="EcoCyc:MONOMER0-1564"/>
<dbReference type="PRO" id="PR:P0ACG4"/>
<dbReference type="Proteomes" id="UP000000625">
    <property type="component" value="Chromosome"/>
</dbReference>
<dbReference type="GO" id="GO:0042597">
    <property type="term" value="C:periplasmic space"/>
    <property type="evidence" value="ECO:0000314"/>
    <property type="project" value="EcoCyc"/>
</dbReference>
<dbReference type="GO" id="GO:0005886">
    <property type="term" value="C:plasma membrane"/>
    <property type="evidence" value="ECO:0000314"/>
    <property type="project" value="EcoCyc"/>
</dbReference>
<dbReference type="InterPro" id="IPR000021">
    <property type="entry name" value="Hok/gef_toxin"/>
</dbReference>
<dbReference type="InterPro" id="IPR018084">
    <property type="entry name" value="Hok/gef_toxin_CS"/>
</dbReference>
<dbReference type="Pfam" id="PF01848">
    <property type="entry name" value="HOK_GEF"/>
    <property type="match status" value="1"/>
</dbReference>
<dbReference type="PRINTS" id="PR00281">
    <property type="entry name" value="HOKGEFTOXIC"/>
</dbReference>
<dbReference type="PROSITE" id="PS00556">
    <property type="entry name" value="HOK_GEF"/>
    <property type="match status" value="1"/>
</dbReference>